<name>ASPM_CANLF</name>
<sequence length="3469" mass="407600">MATRRAGRSWEVSPSGPRPAAGEAAAASPPVLSLSHFCRSPFLCFGDVRLGGSRTLPLLLHNPNDEAARVEVCRAPAAQQGFSVSPRRFQLQPKEKIVISVNWTPLKEGRVRETVTFLVNDVLKHQAILLGNAEEQKKKKRSLWGTIKKKKMSASSNNKRISSAQNVNKTFCVSQKADRVRNPLQACENLDVNEGCSPTENNSLILEENKIPISPISPIFKECNGETSLPLSVRRSTTYISLHARENGDLLKVEDASILEDFSFSEKVVNETSFNSTNNINDQTEENCKLILTPACSSTLNITQSQGNFLSPDSFVKNSRAANNELEVVTCLSSNILMKDNSMPLHLESKSVHENYRKILSPDSFINDNYGLNQDLESEPINPILSPNQFVKDNMAYTCIYQQTCKLSLSSNKNSQFSQSQDPRTNGILPCIPECQSSKSPKATFEEHRALEMKSDCYSFTKNQPKFSAMQDISSCSQDKLTRRPILSATITKRKSNFTRENQKETNKPKAKRCLNSVAGEFEKVTDNIKEKDGFQSCLPVIDPVFSKPKSYKIVVTPPSKTTLIARKRRSEGDREDANVRITATGHSEIQEIKRIHFSPVESKTSVLKKTKKMTTPISKHFNREKLNLKKKTDSRIYRTPNSKTSKKTKPIVAVAQSTLTFIKPLKTDIPRHPMPFAAKNMFYDERWKEKQEQGFTWWLNFILTPDDFTVKTNISEVNAATLLLGVESQHKISVPRAPTKDEMSLRAYTARCRLNRLRRAACRLFTSEKMVKAIKKLEIEIEARRLIVRRDRHLWKDVGERQKVLNWLLSYNPLWLRIGLETVFGELLSLEDNSDVTGLAVFILNRLLWNPDIAAEYRHPTVPHLYRDGHEEALSKFTLKKLLLLVCFLDYAKISKLIDHDPCLFCKDAEFKTSKDILLAFSRDFLSGEGDLSRHLSLLGLPVNHVQTPFDEFDFAVTNLAVDLQCGVRLVRIMELLTRDWNLSKKLRMPAISRLQKMHNVDIVLQILRSQGIQLNDEHGNAILSKDIVDRHREKTLALLWKIAFAFQVDISLNLDQLKEEIDFLKHTQSMKKMSAQSCHSDVIINKKKDNRNSGSFEQYSESIKLLMEWVNAVCAFYNKKVENFTVSFSDGRVLCYLIHHYHPYYVPFDAICQRTTQTIECTQTGSVVLNSSSESDGSSLDLSLKAFDHENTSELYKELLENEKKNFQLVRSAVRDLGGIPAMINHSDMSNTIPDEKVVITYLSFLCSRLLDLCKETRAARLIQTTWRKYKLKTDMKRHQEQDKAARIIQSAIINFLTKRRLKKEISAALAIQKYWRRFLAQRKLLMLKKEKLEKVQNESASIIQRYWRRYSTRKQFLKLRYYSIILQSRIRMIIAVTSYKRYLWATVTIQRHWRASLRRKHDQQRYKMLKSSCLIIQSMFRRWKRRKMQLQIKATRVLQRAFREWHVRKRAKEEKSAIVIQSWYRMHKELRKYVQIRSCVVIIQTRFRCLQAQKLYKRKKEAILTIQKYYKAYLKGKMERTNYLQKRAAAIRLQTAFRRMKARNLYRQSRAACVLQSYWRMRQDRFRFLNLKKITTKLQAQVRKHQQLQKYRKIKKAALVIQIHFRAYVSAKKVLASYQKTRSAVLVLQSAYRGMQARKKFIHILTSIIKIQSCYRAYISRKRFLRLKNATVKLQSIVKMRQTRKRYLHWRAASLFIQRWYRSAKLAALKRHQYVQMRESCIKLQAFVRGHLVRKQIRLQRQAAISLQSYFRMRKKRQYYLEIYKATLVIQNYYRAYKAQVNQRKNFLQVKRAVTCLQAAYRGYKVRQLIKQQSIAALKIQTAFRGYRERKKYQYVLQSTIKIQRWYRTCRTVRDVRTQFLKTRAAVISLQCAFRGWKVRKQIRRERQAAVRIQSAFRMAKAQKQFKLLKTAALVIQQHLRAWTAGKRQRMEYIELREAALRLQSTWKGKRVRRQVQKQHKCAVIIQSNYRMYVQQKKWKIMKKAARLIQMYYRAYSIGRKQRQLYLKTKAAAVVLQSAYRSMKVRKKIKECNRAAVTIQSTYRAYKTKKNYTNCRASAIIIQRWYRGTKIANHQRKEYLNLKKTAVKIQAIYRGIRVRRHNRHLHMAATVIQAMFKMHQAKMRYHKMRTAAVIIQVRYRAYREGKIQRAKYLTIMKAITVLQASFRGTRVRQTLRKMQSAATLIQSYYRRHRQQAYFTKLKKVTRTIQQRYRAVKERNTQLQRYNKLRHSIICIQAGFRGMKARRHLKSMHLAATLIQRRFRTLRMRRRFLHLRKTAIWIQRKYRATVCAKHYFQHFVRVQKAVIKIQSSYRGWMVRKKMQEVHRAATAIQAAFRMHRANVKYQALKHASVVIQQQFRASRAAKLQRQCYLQQRHSALILQAAFRGMKARGHLKNMHSSATLIQSTFRSLVVRKRFISLKRATVFVQRKYRATICARHHLHQFLKLKKAVITIQSSYRRLVAKKKLQEMHRAAVLIQATYRMHRTYVTFQTWKHASILIQQHYRTYRAAKLQRENSVPQRRSALIIQAVYKGMKARQLLREKHRAAIIIQSTYRMYRQYLFYQKIQWATKVIQEKYRANKKKALQHSALRNAAAACTEADFQDMILRKPTQEQHQAATIIQKHFKASKVRKHYLHLRANVIFVQRRYRALTAVRTQAVVCTQSSYRSCKVQEDMQHRHLAATRIQSFYRMHRAKLDYQAKKTAVAVIQNYFRSYIRVKVEREKFLAVQKSVRIIQAAFRGMKVRERLKSLSEVNMVASAKQSAFYSCRTEAQCAAVHGSALRTQKWHGASLVTCSQEAEYPQREALVATQRAFCEMVTRKLETQKCAALRIQYFLQMAVCRRRFVQQKRAAVTLQQYFRTWQTRRQFLLYRKAAVVLQNHHRAFLSTKHQRQVYLQIRSSIIMIQARTRGFIQKRRFQKIKDSTIKIQAVWRSYKARKYLHQVKAACKIQAWYRYWKARKDYLAVLKAVKIIQGCFYTKLERRRFLNVRASTIIIQRKWRAILSGRIACEHFLMIKRHQAACLIQANFRRYKGRQVFLRQKSAALTIQRYIRARKAGKCQRIKYVELKKSTVVLQALVRGWLVRKRILEQRTKIRLLHFTAAAYYHLSALKIQRAYKRHMAMKNANKQVNAVICIQRWFRTRLQQKRFAQKYPSILTSQHEVPECMSQQNRAASVIQKAVRRFLLRKKQEKFNNAISRIQSLWRGYSWRKKNDCTKIKAIRLSLQLVNREIREENKLYKRTALALHYLLTYKHLSAILEALKHLEVVTRLSPLCCENMAQSGAVSKIFVLIRSCNRSIPCMEVIRYAVQVLLNVAKYEKTTAAVSDVENCIDTLLDLLQMYREKPGDKVADKGGSIFTKTCCLLAVLLKTTNRASSVRSKSKVVDRIYSLYKLTARKHKMNTERTLYKQKMNSSISTPFIPETPVRTRIVSRLKPDWVLRRDNMEEITNPLQAIQMVMDTLGIPY</sequence>
<accession>P62286</accession>
<organism>
    <name type="scientific">Canis lupus familiaris</name>
    <name type="common">Dog</name>
    <name type="synonym">Canis familiaris</name>
    <dbReference type="NCBI Taxonomy" id="9615"/>
    <lineage>
        <taxon>Eukaryota</taxon>
        <taxon>Metazoa</taxon>
        <taxon>Chordata</taxon>
        <taxon>Craniata</taxon>
        <taxon>Vertebrata</taxon>
        <taxon>Euteleostomi</taxon>
        <taxon>Mammalia</taxon>
        <taxon>Eutheria</taxon>
        <taxon>Laurasiatheria</taxon>
        <taxon>Carnivora</taxon>
        <taxon>Caniformia</taxon>
        <taxon>Canidae</taxon>
        <taxon>Canis</taxon>
    </lineage>
</organism>
<comment type="function">
    <text evidence="1">Probable role in mitotic spindle regulation and coordination of mitotic processes. May have a preferential role in regulating neurogenesis (By similarity).</text>
</comment>
<comment type="subcellular location">
    <subcellularLocation>
        <location evidence="1">Cytoplasm</location>
    </subcellularLocation>
    <subcellularLocation>
        <location evidence="1">Cytoplasm</location>
        <location evidence="1">Cytoskeleton</location>
        <location evidence="1">Spindle</location>
    </subcellularLocation>
    <subcellularLocation>
        <location evidence="1">Nucleus</location>
    </subcellularLocation>
    <text evidence="1">The nuclear-cytoplasmic distribution could be regulated by the availability of calmodulin. Localizes to spindle poles during mitosis (By similarity).</text>
</comment>
<proteinExistence type="evidence at transcript level"/>
<protein>
    <recommendedName>
        <fullName>Abnormal spindle-like microcephaly-associated protein homolog</fullName>
    </recommendedName>
</protein>
<keyword id="KW-0112">Calmodulin-binding</keyword>
<keyword id="KW-0131">Cell cycle</keyword>
<keyword id="KW-0132">Cell division</keyword>
<keyword id="KW-0175">Coiled coil</keyword>
<keyword id="KW-0963">Cytoplasm</keyword>
<keyword id="KW-0206">Cytoskeleton</keyword>
<keyword id="KW-0498">Mitosis</keyword>
<keyword id="KW-0539">Nucleus</keyword>
<keyword id="KW-0597">Phosphoprotein</keyword>
<keyword id="KW-1185">Reference proteome</keyword>
<keyword id="KW-0677">Repeat</keyword>
<evidence type="ECO:0000250" key="1"/>
<evidence type="ECO:0000250" key="2">
    <source>
        <dbReference type="UniProtKB" id="Q8IZT6"/>
    </source>
</evidence>
<evidence type="ECO:0000255" key="3"/>
<evidence type="ECO:0000255" key="4">
    <source>
        <dbReference type="PROSITE-ProRule" id="PRU00044"/>
    </source>
</evidence>
<evidence type="ECO:0000255" key="5">
    <source>
        <dbReference type="PROSITE-ProRule" id="PRU00116"/>
    </source>
</evidence>
<evidence type="ECO:0000256" key="6">
    <source>
        <dbReference type="SAM" id="MobiDB-lite"/>
    </source>
</evidence>
<evidence type="ECO:0000305" key="7"/>
<dbReference type="EMBL" id="AAEX02025887">
    <property type="status" value="NOT_ANNOTATED_CDS"/>
    <property type="molecule type" value="Genomic_DNA"/>
</dbReference>
<dbReference type="EMBL" id="AY485421">
    <property type="protein sequence ID" value="AAR98742.1"/>
    <property type="molecule type" value="mRNA"/>
</dbReference>
<dbReference type="RefSeq" id="NP_001184005.1">
    <property type="nucleotide sequence ID" value="NM_001197076.1"/>
</dbReference>
<dbReference type="SMR" id="P62286"/>
<dbReference type="FunCoup" id="P62286">
    <property type="interactions" value="69"/>
</dbReference>
<dbReference type="STRING" id="9615.ENSCAFP00000016776"/>
<dbReference type="PaxDb" id="9612-ENSCAFP00000016776"/>
<dbReference type="Ensembl" id="ENSCAFT00000018114.5">
    <property type="protein sequence ID" value="ENSCAFP00000016776.3"/>
    <property type="gene ID" value="ENSCAFG00000011403.6"/>
</dbReference>
<dbReference type="GeneID" id="480009"/>
<dbReference type="KEGG" id="cfa:480009"/>
<dbReference type="CTD" id="259266"/>
<dbReference type="VGNC" id="VGNC:38189">
    <property type="gene designation" value="ASPM"/>
</dbReference>
<dbReference type="eggNOG" id="KOG0165">
    <property type="taxonomic scope" value="Eukaryota"/>
</dbReference>
<dbReference type="HOGENOM" id="CLU_000237_0_0_1"/>
<dbReference type="InParanoid" id="P62286"/>
<dbReference type="OMA" id="QSHWRAT"/>
<dbReference type="OrthoDB" id="2148418at2759"/>
<dbReference type="TreeFam" id="TF351180"/>
<dbReference type="Proteomes" id="UP000002254">
    <property type="component" value="Chromosome 7"/>
</dbReference>
<dbReference type="Proteomes" id="UP000694429">
    <property type="component" value="Unplaced"/>
</dbReference>
<dbReference type="Proteomes" id="UP000694542">
    <property type="component" value="Unplaced"/>
</dbReference>
<dbReference type="Proteomes" id="UP000805418">
    <property type="component" value="Unplaced"/>
</dbReference>
<dbReference type="Bgee" id="ENSCAFG00000011403">
    <property type="expression patterns" value="Expressed in keratinocyte and 30 other cell types or tissues"/>
</dbReference>
<dbReference type="GO" id="GO:0005737">
    <property type="term" value="C:cytoplasm"/>
    <property type="evidence" value="ECO:0007669"/>
    <property type="project" value="UniProtKB-SubCell"/>
</dbReference>
<dbReference type="GO" id="GO:0005634">
    <property type="term" value="C:nucleus"/>
    <property type="evidence" value="ECO:0007669"/>
    <property type="project" value="UniProtKB-SubCell"/>
</dbReference>
<dbReference type="GO" id="GO:0005819">
    <property type="term" value="C:spindle"/>
    <property type="evidence" value="ECO:0007669"/>
    <property type="project" value="UniProtKB-SubCell"/>
</dbReference>
<dbReference type="GO" id="GO:0005516">
    <property type="term" value="F:calmodulin binding"/>
    <property type="evidence" value="ECO:0007669"/>
    <property type="project" value="UniProtKB-KW"/>
</dbReference>
<dbReference type="GO" id="GO:0051301">
    <property type="term" value="P:cell division"/>
    <property type="evidence" value="ECO:0007669"/>
    <property type="project" value="UniProtKB-KW"/>
</dbReference>
<dbReference type="CDD" id="cd21223">
    <property type="entry name" value="CH_ASPM_rpt1"/>
    <property type="match status" value="1"/>
</dbReference>
<dbReference type="CDD" id="cd21224">
    <property type="entry name" value="CH_ASPM_rpt2"/>
    <property type="match status" value="1"/>
</dbReference>
<dbReference type="FunFam" id="1.10.418.10:FF:000051">
    <property type="entry name" value="Abnormal spindle-like microcephaly-associated protein homolog"/>
    <property type="match status" value="1"/>
</dbReference>
<dbReference type="FunFam" id="1.20.5.190:FF:000008">
    <property type="entry name" value="Abnormal spindle-like microcephaly-associated protein homolog"/>
    <property type="match status" value="8"/>
</dbReference>
<dbReference type="FunFam" id="1.20.5.190:FF:000009">
    <property type="entry name" value="Abnormal spindle-like microcephaly-associated protein homolog"/>
    <property type="match status" value="3"/>
</dbReference>
<dbReference type="FunFam" id="1.20.5.190:FF:000010">
    <property type="entry name" value="Abnormal spindle-like microcephaly-associated protein homolog"/>
    <property type="match status" value="2"/>
</dbReference>
<dbReference type="FunFam" id="1.20.5.190:FF:000016">
    <property type="entry name" value="Abnormal spindle-like microcephaly-associated protein homolog"/>
    <property type="match status" value="1"/>
</dbReference>
<dbReference type="FunFam" id="1.20.5.190:FF:000030">
    <property type="entry name" value="Abnormal spindle-like microcephaly-associated protein homolog"/>
    <property type="match status" value="1"/>
</dbReference>
<dbReference type="FunFam" id="1.20.5.190:FF:000032">
    <property type="entry name" value="Abnormal spindle-like microcephaly-associated protein homolog"/>
    <property type="match status" value="1"/>
</dbReference>
<dbReference type="FunFam" id="1.20.5.190:FF:000059">
    <property type="entry name" value="Abnormal spindle-like microcephaly-associated protein homolog"/>
    <property type="match status" value="1"/>
</dbReference>
<dbReference type="FunFam" id="2.60.40.10:FF:001429">
    <property type="entry name" value="Abnormal spindle-like microcephaly-associated protein homolog"/>
    <property type="match status" value="1"/>
</dbReference>
<dbReference type="Gene3D" id="1.20.5.190">
    <property type="match status" value="33"/>
</dbReference>
<dbReference type="Gene3D" id="1.10.418.10">
    <property type="entry name" value="Calponin-like domain"/>
    <property type="match status" value="2"/>
</dbReference>
<dbReference type="Gene3D" id="2.60.40.10">
    <property type="entry name" value="Immunoglobulins"/>
    <property type="match status" value="1"/>
</dbReference>
<dbReference type="Gene3D" id="1.25.10.10">
    <property type="entry name" value="Leucine-rich Repeat Variant"/>
    <property type="match status" value="1"/>
</dbReference>
<dbReference type="InterPro" id="IPR011989">
    <property type="entry name" value="ARM-like"/>
</dbReference>
<dbReference type="InterPro" id="IPR016024">
    <property type="entry name" value="ARM-type_fold"/>
</dbReference>
<dbReference type="InterPro" id="IPR031549">
    <property type="entry name" value="ASH"/>
</dbReference>
<dbReference type="InterPro" id="IPR051185">
    <property type="entry name" value="ASPM"/>
</dbReference>
<dbReference type="InterPro" id="IPR001715">
    <property type="entry name" value="CH_dom"/>
</dbReference>
<dbReference type="InterPro" id="IPR036872">
    <property type="entry name" value="CH_dom_sf"/>
</dbReference>
<dbReference type="InterPro" id="IPR013783">
    <property type="entry name" value="Ig-like_fold"/>
</dbReference>
<dbReference type="InterPro" id="IPR000048">
    <property type="entry name" value="IQ_motif_EF-hand-BS"/>
</dbReference>
<dbReference type="InterPro" id="IPR027417">
    <property type="entry name" value="P-loop_NTPase"/>
</dbReference>
<dbReference type="PANTHER" id="PTHR22706">
    <property type="entry name" value="ASSEMBLY FACTOR FOR SPINDLE MICROTUBULES"/>
    <property type="match status" value="1"/>
</dbReference>
<dbReference type="PANTHER" id="PTHR22706:SF1">
    <property type="entry name" value="ASSEMBLY FACTOR FOR SPINDLE MICROTUBULES"/>
    <property type="match status" value="1"/>
</dbReference>
<dbReference type="Pfam" id="PF15780">
    <property type="entry name" value="ASH"/>
    <property type="match status" value="1"/>
</dbReference>
<dbReference type="Pfam" id="PF00307">
    <property type="entry name" value="CH"/>
    <property type="match status" value="1"/>
</dbReference>
<dbReference type="Pfam" id="PF00612">
    <property type="entry name" value="IQ"/>
    <property type="match status" value="40"/>
</dbReference>
<dbReference type="SMART" id="SM00033">
    <property type="entry name" value="CH"/>
    <property type="match status" value="2"/>
</dbReference>
<dbReference type="SMART" id="SM00015">
    <property type="entry name" value="IQ"/>
    <property type="match status" value="65"/>
</dbReference>
<dbReference type="SUPFAM" id="SSF48371">
    <property type="entry name" value="ARM repeat"/>
    <property type="match status" value="1"/>
</dbReference>
<dbReference type="SUPFAM" id="SSF47576">
    <property type="entry name" value="Calponin-homology domain, CH-domain"/>
    <property type="match status" value="1"/>
</dbReference>
<dbReference type="SUPFAM" id="SSF52540">
    <property type="entry name" value="P-loop containing nucleoside triphosphate hydrolases"/>
    <property type="match status" value="15"/>
</dbReference>
<dbReference type="PROSITE" id="PS50021">
    <property type="entry name" value="CH"/>
    <property type="match status" value="2"/>
</dbReference>
<dbReference type="PROSITE" id="PS50096">
    <property type="entry name" value="IQ"/>
    <property type="match status" value="38"/>
</dbReference>
<feature type="chain" id="PRO_0000191328" description="Abnormal spindle-like microcephaly-associated protein homolog">
    <location>
        <begin position="1"/>
        <end position="3469"/>
    </location>
</feature>
<feature type="domain" description="Calponin-homology (CH) 1" evidence="4">
    <location>
        <begin position="913"/>
        <end position="1049"/>
    </location>
</feature>
<feature type="domain" description="Calponin-homology (CH) 2" evidence="4">
    <location>
        <begin position="1102"/>
        <end position="1253"/>
    </location>
</feature>
<feature type="domain" description="IQ 1" evidence="5">
    <location>
        <begin position="1258"/>
        <end position="1287"/>
    </location>
</feature>
<feature type="domain" description="IQ 2" evidence="5">
    <location>
        <begin position="1339"/>
        <end position="1370"/>
    </location>
</feature>
<feature type="domain" description="IQ 3" evidence="5">
    <location>
        <begin position="1385"/>
        <end position="1414"/>
    </location>
</feature>
<feature type="domain" description="IQ 4" evidence="5">
    <location>
        <begin position="1529"/>
        <end position="1560"/>
    </location>
</feature>
<feature type="domain" description="IQ 5" evidence="5">
    <location>
        <begin position="1574"/>
        <end position="1605"/>
    </location>
</feature>
<feature type="domain" description="IQ 6" evidence="5">
    <location>
        <begin position="1624"/>
        <end position="1653"/>
    </location>
</feature>
<feature type="domain" description="IQ 7" evidence="5">
    <location>
        <begin position="1647"/>
        <end position="1676"/>
    </location>
</feature>
<feature type="domain" description="IQ 8" evidence="5">
    <location>
        <begin position="1720"/>
        <end position="1749"/>
    </location>
</feature>
<feature type="domain" description="IQ 9" evidence="5">
    <location>
        <begin position="1743"/>
        <end position="1774"/>
    </location>
</feature>
<feature type="domain" description="IQ 10" evidence="5">
    <location>
        <begin position="1793"/>
        <end position="1822"/>
    </location>
</feature>
<feature type="domain" description="IQ 11" evidence="5">
    <location>
        <begin position="1816"/>
        <end position="1845"/>
    </location>
</feature>
<feature type="domain" description="IQ 12" evidence="5">
    <location>
        <begin position="1866"/>
        <end position="1895"/>
    </location>
</feature>
<feature type="domain" description="IQ 13" evidence="5">
    <location>
        <begin position="1889"/>
        <end position="1920"/>
    </location>
</feature>
<feature type="domain" description="IQ 14" evidence="5">
    <location>
        <begin position="1939"/>
        <end position="1970"/>
    </location>
</feature>
<feature type="domain" description="IQ 15" evidence="5">
    <location>
        <begin position="1962"/>
        <end position="1993"/>
    </location>
</feature>
<feature type="domain" description="IQ 16" evidence="5">
    <location>
        <begin position="2012"/>
        <end position="2041"/>
    </location>
</feature>
<feature type="domain" description="IQ 17" evidence="5">
    <location>
        <begin position="2035"/>
        <end position="2066"/>
    </location>
</feature>
<feature type="domain" description="IQ 18" evidence="5">
    <location>
        <begin position="2085"/>
        <end position="2116"/>
    </location>
</feature>
<feature type="domain" description="IQ 19" evidence="5">
    <location>
        <begin position="2108"/>
        <end position="2139"/>
    </location>
</feature>
<feature type="domain" description="IQ 20" evidence="5">
    <location>
        <begin position="2158"/>
        <end position="2189"/>
    </location>
</feature>
<feature type="domain" description="IQ 21" evidence="5">
    <location>
        <begin position="2181"/>
        <end position="2210"/>
    </location>
</feature>
<feature type="domain" description="IQ 22" evidence="5">
    <location>
        <begin position="2231"/>
        <end position="2262"/>
    </location>
</feature>
<feature type="domain" description="IQ 23" evidence="5">
    <location>
        <begin position="2304"/>
        <end position="2333"/>
    </location>
</feature>
<feature type="domain" description="IQ 24" evidence="5">
    <location>
        <begin position="2327"/>
        <end position="2358"/>
    </location>
</feature>
<feature type="domain" description="IQ 25" evidence="5">
    <location>
        <begin position="2377"/>
        <end position="2408"/>
    </location>
</feature>
<feature type="domain" description="IQ 26" evidence="5">
    <location>
        <begin position="2400"/>
        <end position="2431"/>
    </location>
</feature>
<feature type="domain" description="IQ 27" evidence="5">
    <location>
        <begin position="2450"/>
        <end position="2481"/>
    </location>
</feature>
<feature type="domain" description="IQ 28" evidence="5">
    <location>
        <begin position="2523"/>
        <end position="2554"/>
    </location>
</feature>
<feature type="domain" description="IQ 29" evidence="5">
    <location>
        <begin position="2681"/>
        <end position="2712"/>
    </location>
</feature>
<feature type="domain" description="IQ 30" evidence="5">
    <location>
        <begin position="2731"/>
        <end position="2762"/>
    </location>
</feature>
<feature type="domain" description="IQ 31" evidence="5">
    <location>
        <begin position="2851"/>
        <end position="2882"/>
    </location>
</feature>
<feature type="domain" description="IQ 32" evidence="5">
    <location>
        <begin position="2901"/>
        <end position="2930"/>
    </location>
</feature>
<feature type="domain" description="IQ 33" evidence="5">
    <location>
        <begin position="2924"/>
        <end position="2955"/>
    </location>
</feature>
<feature type="domain" description="IQ 34" evidence="5">
    <location>
        <begin position="2946"/>
        <end position="2977"/>
    </location>
</feature>
<feature type="domain" description="IQ 35" evidence="5">
    <location>
        <begin position="3021"/>
        <end position="3050"/>
    </location>
</feature>
<feature type="domain" description="IQ 36" evidence="5">
    <location>
        <begin position="3071"/>
        <end position="3102"/>
    </location>
</feature>
<feature type="domain" description="IQ 37" evidence="5">
    <location>
        <begin position="3173"/>
        <end position="3202"/>
    </location>
</feature>
<feature type="domain" description="IQ 38" evidence="5">
    <location>
        <begin position="3196"/>
        <end position="3227"/>
    </location>
</feature>
<feature type="region of interest" description="Disordered" evidence="6">
    <location>
        <begin position="1"/>
        <end position="24"/>
    </location>
</feature>
<feature type="coiled-coil region" evidence="3">
    <location>
        <begin position="1050"/>
        <end position="1069"/>
    </location>
</feature>
<feature type="compositionally biased region" description="Low complexity" evidence="6">
    <location>
        <begin position="13"/>
        <end position="24"/>
    </location>
</feature>
<feature type="modified residue" description="Phosphoserine" evidence="2">
    <location>
        <position position="273"/>
    </location>
</feature>
<feature type="modified residue" description="Phosphoserine" evidence="2">
    <location>
        <position position="276"/>
    </location>
</feature>
<feature type="modified residue" description="Phosphoserine" evidence="2">
    <location>
        <position position="361"/>
    </location>
</feature>
<feature type="modified residue" description="Phosphoserine" evidence="2">
    <location>
        <position position="386"/>
    </location>
</feature>
<feature type="modified residue" description="Phosphoserine" evidence="2">
    <location>
        <position position="420"/>
    </location>
</feature>
<feature type="modified residue" description="Phosphoserine" evidence="2">
    <location>
        <position position="599"/>
    </location>
</feature>
<feature type="modified residue" description="Phosphoserine" evidence="2">
    <location>
        <position position="1095"/>
    </location>
</feature>
<feature type="sequence conflict" description="In Ref. 2; AAR98742." evidence="7" ref="2">
    <original>R</original>
    <variation>Q</variation>
    <location>
        <position position="1687"/>
    </location>
</feature>
<feature type="sequence conflict" description="In Ref. 2; AAR98742." evidence="7" ref="2">
    <original>R</original>
    <variation>G</variation>
    <location>
        <position position="2175"/>
    </location>
</feature>
<feature type="sequence conflict" description="In Ref. 2; AAR98742." evidence="7" ref="2">
    <original>Q</original>
    <variation>E</variation>
    <location>
        <position position="2182"/>
    </location>
</feature>
<feature type="sequence conflict" description="In Ref. 2; AAR98742." evidence="7" ref="2">
    <original>C</original>
    <variation>R</variation>
    <location>
        <position position="2237"/>
    </location>
</feature>
<feature type="sequence conflict" description="In Ref. 2; AAR98742." evidence="7" ref="2">
    <original>P</original>
    <variation>R</variation>
    <location>
        <position position="2522"/>
    </location>
</feature>
<feature type="sequence conflict" description="In Ref. 2; AAR98742." evidence="7" ref="2">
    <original>E</original>
    <variation>K</variation>
    <location>
        <position position="2578"/>
    </location>
</feature>
<feature type="sequence conflict" description="In Ref. 2; AAR98742." evidence="7" ref="2">
    <original>L</original>
    <variation>V</variation>
    <location>
        <position position="2588"/>
    </location>
</feature>
<feature type="sequence conflict" description="In Ref. 2; AAR98742." evidence="7" ref="2">
    <original>K</original>
    <variation>N</variation>
    <location>
        <position position="2727"/>
    </location>
</feature>
<feature type="sequence conflict" description="In Ref. 2; AAR98742." evidence="7" ref="2">
    <original>S</original>
    <variation>A</variation>
    <location>
        <position position="3205"/>
    </location>
</feature>
<reference key="1">
    <citation type="journal article" date="2005" name="Nature">
        <title>Genome sequence, comparative analysis and haplotype structure of the domestic dog.</title>
        <authorList>
            <person name="Lindblad-Toh K."/>
            <person name="Wade C.M."/>
            <person name="Mikkelsen T.S."/>
            <person name="Karlsson E.K."/>
            <person name="Jaffe D.B."/>
            <person name="Kamal M."/>
            <person name="Clamp M."/>
            <person name="Chang J.L."/>
            <person name="Kulbokas E.J. III"/>
            <person name="Zody M.C."/>
            <person name="Mauceli E."/>
            <person name="Xie X."/>
            <person name="Breen M."/>
            <person name="Wayne R.K."/>
            <person name="Ostrander E.A."/>
            <person name="Ponting C.P."/>
            <person name="Galibert F."/>
            <person name="Smith D.R."/>
            <person name="deJong P.J."/>
            <person name="Kirkness E.F."/>
            <person name="Alvarez P."/>
            <person name="Biagi T."/>
            <person name="Brockman W."/>
            <person name="Butler J."/>
            <person name="Chin C.-W."/>
            <person name="Cook A."/>
            <person name="Cuff J."/>
            <person name="Daly M.J."/>
            <person name="DeCaprio D."/>
            <person name="Gnerre S."/>
            <person name="Grabherr M."/>
            <person name="Kellis M."/>
            <person name="Kleber M."/>
            <person name="Bardeleben C."/>
            <person name="Goodstadt L."/>
            <person name="Heger A."/>
            <person name="Hitte C."/>
            <person name="Kim L."/>
            <person name="Koepfli K.-P."/>
            <person name="Parker H.G."/>
            <person name="Pollinger J.P."/>
            <person name="Searle S.M.J."/>
            <person name="Sutter N.B."/>
            <person name="Thomas R."/>
            <person name="Webber C."/>
            <person name="Baldwin J."/>
            <person name="Abebe A."/>
            <person name="Abouelleil A."/>
            <person name="Aftuck L."/>
            <person name="Ait-Zahra M."/>
            <person name="Aldredge T."/>
            <person name="Allen N."/>
            <person name="An P."/>
            <person name="Anderson S."/>
            <person name="Antoine C."/>
            <person name="Arachchi H."/>
            <person name="Aslam A."/>
            <person name="Ayotte L."/>
            <person name="Bachantsang P."/>
            <person name="Barry A."/>
            <person name="Bayul T."/>
            <person name="Benamara M."/>
            <person name="Berlin A."/>
            <person name="Bessette D."/>
            <person name="Blitshteyn B."/>
            <person name="Bloom T."/>
            <person name="Blye J."/>
            <person name="Boguslavskiy L."/>
            <person name="Bonnet C."/>
            <person name="Boukhgalter B."/>
            <person name="Brown A."/>
            <person name="Cahill P."/>
            <person name="Calixte N."/>
            <person name="Camarata J."/>
            <person name="Cheshatsang Y."/>
            <person name="Chu J."/>
            <person name="Citroen M."/>
            <person name="Collymore A."/>
            <person name="Cooke P."/>
            <person name="Dawoe T."/>
            <person name="Daza R."/>
            <person name="Decktor K."/>
            <person name="DeGray S."/>
            <person name="Dhargay N."/>
            <person name="Dooley K."/>
            <person name="Dooley K."/>
            <person name="Dorje P."/>
            <person name="Dorjee K."/>
            <person name="Dorris L."/>
            <person name="Duffey N."/>
            <person name="Dupes A."/>
            <person name="Egbiremolen O."/>
            <person name="Elong R."/>
            <person name="Falk J."/>
            <person name="Farina A."/>
            <person name="Faro S."/>
            <person name="Ferguson D."/>
            <person name="Ferreira P."/>
            <person name="Fisher S."/>
            <person name="FitzGerald M."/>
            <person name="Foley K."/>
            <person name="Foley C."/>
            <person name="Franke A."/>
            <person name="Friedrich D."/>
            <person name="Gage D."/>
            <person name="Garber M."/>
            <person name="Gearin G."/>
            <person name="Giannoukos G."/>
            <person name="Goode T."/>
            <person name="Goyette A."/>
            <person name="Graham J."/>
            <person name="Grandbois E."/>
            <person name="Gyaltsen K."/>
            <person name="Hafez N."/>
            <person name="Hagopian D."/>
            <person name="Hagos B."/>
            <person name="Hall J."/>
            <person name="Healy C."/>
            <person name="Hegarty R."/>
            <person name="Honan T."/>
            <person name="Horn A."/>
            <person name="Houde N."/>
            <person name="Hughes L."/>
            <person name="Hunnicutt L."/>
            <person name="Husby M."/>
            <person name="Jester B."/>
            <person name="Jones C."/>
            <person name="Kamat A."/>
            <person name="Kanga B."/>
            <person name="Kells C."/>
            <person name="Khazanovich D."/>
            <person name="Kieu A.C."/>
            <person name="Kisner P."/>
            <person name="Kumar M."/>
            <person name="Lance K."/>
            <person name="Landers T."/>
            <person name="Lara M."/>
            <person name="Lee W."/>
            <person name="Leger J.-P."/>
            <person name="Lennon N."/>
            <person name="Leuper L."/>
            <person name="LeVine S."/>
            <person name="Liu J."/>
            <person name="Liu X."/>
            <person name="Lokyitsang Y."/>
            <person name="Lokyitsang T."/>
            <person name="Lui A."/>
            <person name="Macdonald J."/>
            <person name="Major J."/>
            <person name="Marabella R."/>
            <person name="Maru K."/>
            <person name="Matthews C."/>
            <person name="McDonough S."/>
            <person name="Mehta T."/>
            <person name="Meldrim J."/>
            <person name="Melnikov A."/>
            <person name="Meneus L."/>
            <person name="Mihalev A."/>
            <person name="Mihova T."/>
            <person name="Miller K."/>
            <person name="Mittelman R."/>
            <person name="Mlenga V."/>
            <person name="Mulrain L."/>
            <person name="Munson G."/>
            <person name="Navidi A."/>
            <person name="Naylor J."/>
            <person name="Nguyen T."/>
            <person name="Nguyen N."/>
            <person name="Nguyen C."/>
            <person name="Nguyen T."/>
            <person name="Nicol R."/>
            <person name="Norbu N."/>
            <person name="Norbu C."/>
            <person name="Novod N."/>
            <person name="Nyima T."/>
            <person name="Olandt P."/>
            <person name="O'Neill B."/>
            <person name="O'Neill K."/>
            <person name="Osman S."/>
            <person name="Oyono L."/>
            <person name="Patti C."/>
            <person name="Perrin D."/>
            <person name="Phunkhang P."/>
            <person name="Pierre F."/>
            <person name="Priest M."/>
            <person name="Rachupka A."/>
            <person name="Raghuraman S."/>
            <person name="Rameau R."/>
            <person name="Ray V."/>
            <person name="Raymond C."/>
            <person name="Rege F."/>
            <person name="Rise C."/>
            <person name="Rogers J."/>
            <person name="Rogov P."/>
            <person name="Sahalie J."/>
            <person name="Settipalli S."/>
            <person name="Sharpe T."/>
            <person name="Shea T."/>
            <person name="Sheehan M."/>
            <person name="Sherpa N."/>
            <person name="Shi J."/>
            <person name="Shih D."/>
            <person name="Sloan J."/>
            <person name="Smith C."/>
            <person name="Sparrow T."/>
            <person name="Stalker J."/>
            <person name="Stange-Thomann N."/>
            <person name="Stavropoulos S."/>
            <person name="Stone C."/>
            <person name="Stone S."/>
            <person name="Sykes S."/>
            <person name="Tchuinga P."/>
            <person name="Tenzing P."/>
            <person name="Tesfaye S."/>
            <person name="Thoulutsang D."/>
            <person name="Thoulutsang Y."/>
            <person name="Topham K."/>
            <person name="Topping I."/>
            <person name="Tsamla T."/>
            <person name="Vassiliev H."/>
            <person name="Venkataraman V."/>
            <person name="Vo A."/>
            <person name="Wangchuk T."/>
            <person name="Wangdi T."/>
            <person name="Weiand M."/>
            <person name="Wilkinson J."/>
            <person name="Wilson A."/>
            <person name="Yadav S."/>
            <person name="Yang S."/>
            <person name="Yang X."/>
            <person name="Young G."/>
            <person name="Yu Q."/>
            <person name="Zainoun J."/>
            <person name="Zembek L."/>
            <person name="Zimmer A."/>
            <person name="Lander E.S."/>
        </authorList>
    </citation>
    <scope>NUCLEOTIDE SEQUENCE [LARGE SCALE GENOMIC DNA]</scope>
    <source>
        <strain>Boxer</strain>
    </source>
</reference>
<reference key="2">
    <citation type="journal article" date="2004" name="Hum. Mol. Genet.">
        <title>Adaptive evolution of ASPM, a major determinant of cerebral cortical size in humans.</title>
        <authorList>
            <person name="Evans P.D."/>
            <person name="Anderson J.R."/>
            <person name="Vallender E.J."/>
            <person name="Gilbert S.L."/>
            <person name="Malcom C.M."/>
            <person name="Dorus S."/>
            <person name="Lahn B.T."/>
        </authorList>
    </citation>
    <scope>NUCLEOTIDE SEQUENCE [MRNA] OF 1-3452</scope>
</reference>
<gene>
    <name type="primary">ASPM</name>
</gene>